<proteinExistence type="inferred from homology"/>
<accession>Q62HV3</accession>
<evidence type="ECO:0000255" key="1">
    <source>
        <dbReference type="HAMAP-Rule" id="MF_00073"/>
    </source>
</evidence>
<reference key="1">
    <citation type="journal article" date="2004" name="Proc. Natl. Acad. Sci. U.S.A.">
        <title>Structural flexibility in the Burkholderia mallei genome.</title>
        <authorList>
            <person name="Nierman W.C."/>
            <person name="DeShazer D."/>
            <person name="Kim H.S."/>
            <person name="Tettelin H."/>
            <person name="Nelson K.E."/>
            <person name="Feldblyum T.V."/>
            <person name="Ulrich R.L."/>
            <person name="Ronning C.M."/>
            <person name="Brinkac L.M."/>
            <person name="Daugherty S.C."/>
            <person name="Davidsen T.D."/>
            <person name="DeBoy R.T."/>
            <person name="Dimitrov G."/>
            <person name="Dodson R.J."/>
            <person name="Durkin A.S."/>
            <person name="Gwinn M.L."/>
            <person name="Haft D.H."/>
            <person name="Khouri H.M."/>
            <person name="Kolonay J.F."/>
            <person name="Madupu R."/>
            <person name="Mohammoud Y."/>
            <person name="Nelson W.C."/>
            <person name="Radune D."/>
            <person name="Romero C.M."/>
            <person name="Sarria S."/>
            <person name="Selengut J."/>
            <person name="Shamblin C."/>
            <person name="Sullivan S.A."/>
            <person name="White O."/>
            <person name="Yu Y."/>
            <person name="Zafar N."/>
            <person name="Zhou L."/>
            <person name="Fraser C.M."/>
        </authorList>
    </citation>
    <scope>NUCLEOTIDE SEQUENCE [LARGE SCALE GENOMIC DNA]</scope>
    <source>
        <strain>ATCC 23344</strain>
    </source>
</reference>
<keyword id="KW-1185">Reference proteome</keyword>
<keyword id="KW-0694">RNA-binding</keyword>
<keyword id="KW-0804">Transcription</keyword>
<keyword id="KW-0889">Transcription antitermination</keyword>
<keyword id="KW-0805">Transcription regulation</keyword>
<protein>
    <recommendedName>
        <fullName evidence="1">Transcription antitermination protein NusB</fullName>
    </recommendedName>
    <alternativeName>
        <fullName evidence="1">Antitermination factor NusB</fullName>
    </alternativeName>
</protein>
<sequence length="145" mass="15981">MKKSARRQSRELATQGLYQWLLSNAAPGEIDAQLRGALGYDKADKTLLDTILHGVIREHATLAEAISPSLDRPIDQLSPVERAVLLIATYELTHQIETPYRVIINEAVELAKTFGGSDGYKYVNGVLDKLAVKLRPAETQARRGA</sequence>
<dbReference type="EMBL" id="CP000010">
    <property type="protein sequence ID" value="AAU49951.1"/>
    <property type="molecule type" value="Genomic_DNA"/>
</dbReference>
<dbReference type="RefSeq" id="WP_004185707.1">
    <property type="nucleotide sequence ID" value="NC_006348.1"/>
</dbReference>
<dbReference type="RefSeq" id="YP_103717.1">
    <property type="nucleotide sequence ID" value="NC_006348.1"/>
</dbReference>
<dbReference type="SMR" id="Q62HV3"/>
<dbReference type="GeneID" id="93061205"/>
<dbReference type="KEGG" id="bma:BMA2147"/>
<dbReference type="PATRIC" id="fig|243160.12.peg.2217"/>
<dbReference type="eggNOG" id="COG0781">
    <property type="taxonomic scope" value="Bacteria"/>
</dbReference>
<dbReference type="HOGENOM" id="CLU_087843_4_1_4"/>
<dbReference type="Proteomes" id="UP000006693">
    <property type="component" value="Chromosome 1"/>
</dbReference>
<dbReference type="GO" id="GO:0005829">
    <property type="term" value="C:cytosol"/>
    <property type="evidence" value="ECO:0007669"/>
    <property type="project" value="TreeGrafter"/>
</dbReference>
<dbReference type="GO" id="GO:0003723">
    <property type="term" value="F:RNA binding"/>
    <property type="evidence" value="ECO:0007669"/>
    <property type="project" value="UniProtKB-UniRule"/>
</dbReference>
<dbReference type="GO" id="GO:0006353">
    <property type="term" value="P:DNA-templated transcription termination"/>
    <property type="evidence" value="ECO:0007669"/>
    <property type="project" value="UniProtKB-UniRule"/>
</dbReference>
<dbReference type="GO" id="GO:0031564">
    <property type="term" value="P:transcription antitermination"/>
    <property type="evidence" value="ECO:0007669"/>
    <property type="project" value="UniProtKB-KW"/>
</dbReference>
<dbReference type="Gene3D" id="1.10.940.10">
    <property type="entry name" value="NusB-like"/>
    <property type="match status" value="1"/>
</dbReference>
<dbReference type="HAMAP" id="MF_00073">
    <property type="entry name" value="NusB"/>
    <property type="match status" value="1"/>
</dbReference>
<dbReference type="InterPro" id="IPR035926">
    <property type="entry name" value="NusB-like_sf"/>
</dbReference>
<dbReference type="InterPro" id="IPR011605">
    <property type="entry name" value="NusB_fam"/>
</dbReference>
<dbReference type="InterPro" id="IPR006027">
    <property type="entry name" value="NusB_RsmB_TIM44"/>
</dbReference>
<dbReference type="NCBIfam" id="TIGR01951">
    <property type="entry name" value="nusB"/>
    <property type="match status" value="1"/>
</dbReference>
<dbReference type="PANTHER" id="PTHR11078:SF3">
    <property type="entry name" value="ANTITERMINATION NUSB DOMAIN-CONTAINING PROTEIN"/>
    <property type="match status" value="1"/>
</dbReference>
<dbReference type="PANTHER" id="PTHR11078">
    <property type="entry name" value="N UTILIZATION SUBSTANCE PROTEIN B-RELATED"/>
    <property type="match status" value="1"/>
</dbReference>
<dbReference type="Pfam" id="PF01029">
    <property type="entry name" value="NusB"/>
    <property type="match status" value="1"/>
</dbReference>
<dbReference type="SUPFAM" id="SSF48013">
    <property type="entry name" value="NusB-like"/>
    <property type="match status" value="1"/>
</dbReference>
<comment type="function">
    <text evidence="1">Involved in transcription antitermination. Required for transcription of ribosomal RNA (rRNA) genes. Binds specifically to the boxA antiterminator sequence of the ribosomal RNA (rrn) operons.</text>
</comment>
<comment type="similarity">
    <text evidence="1">Belongs to the NusB family.</text>
</comment>
<organism>
    <name type="scientific">Burkholderia mallei (strain ATCC 23344)</name>
    <dbReference type="NCBI Taxonomy" id="243160"/>
    <lineage>
        <taxon>Bacteria</taxon>
        <taxon>Pseudomonadati</taxon>
        <taxon>Pseudomonadota</taxon>
        <taxon>Betaproteobacteria</taxon>
        <taxon>Burkholderiales</taxon>
        <taxon>Burkholderiaceae</taxon>
        <taxon>Burkholderia</taxon>
        <taxon>pseudomallei group</taxon>
    </lineage>
</organism>
<name>NUSB_BURMA</name>
<feature type="chain" id="PRO_0000265496" description="Transcription antitermination protein NusB">
    <location>
        <begin position="1"/>
        <end position="145"/>
    </location>
</feature>
<gene>
    <name evidence="1" type="primary">nusB</name>
    <name type="ordered locus">BMA2147</name>
</gene>